<name>RBM15_MOUSE</name>
<comment type="function">
    <text evidence="1 5 6 7 8 9">RNA-binding protein that acts as a key regulator of N6-methyladenosine (m6A) methylation of RNAs, thereby regulating different processes, such as hematopoietic cell homeostasis, alternative splicing of mRNAs and X chromosome inactivation mediated by Xist RNA (PubMed:29535189). Associated component of the WMM complex, a complex that mediates N6-methyladenosine (m6A) methylation of RNAs, a modification that plays a role in the efficiency of mRNA splicing and RNA processing (PubMed:29535189). Plays a key role in m6A methylation, possibly by binding target RNAs and recruiting the WMM complex (PubMed:29535189). Involved in random X inactivation mediated by Xist RNA: acts by binding Xist RNA and recruiting the WMM complex, which mediates m6A methylation, leading to target YTHDC1 reader on Xist RNA and promoting transcription repression activity of Xist (By similarity). Required for the development of multiple tissues, such as the maintenance of the homeostasis of long-term hematopoietic stem cells and for megakaryocyte (MK) and B-cell differentiation (PubMed:17283045, PubMed:17376872, PubMed:18981216, PubMed:25468569). Regulates megakaryocyte differentiation by regulating alternative splicing of genes important for megakaryocyte differentiation; probably regulates alternative splicing via m6A regulation (By similarity). Required for placental vascular branching morphogenesis and embryonic development of the heart and spleen (PubMed:18981216). Acts as a regulator of thrombopoietin response in hematopoietic stem cells by regulating alternative splicing of MPL (PubMed:25468569). May also function as an mRNA export factor, stimulating export and expression of RTE-containing mRNAs which are present in many retrotransposons that require to be exported prior to splicing (By similarity). High affinity binding of pre-mRNA to RBM15 may allow targeting of the mRNP to the export helicase DBP5 in a manner that is independent of splicing-mediated NXF1 deposition, resulting in export prior to splicing (By similarity). May be implicated in HOX gene regulation (By similarity).</text>
</comment>
<comment type="subunit">
    <text evidence="1 5 9">Component of the WMM complex, a N6-methyltransferase complex composed of a catalytic subcomplex, named MAC, and of an associated subcomplex, named MACOM (PubMed:29535189). The MAC subcomplex is composed of METTL3 and METTL14 (PubMed:29535189). The MACOM subcomplex is composed of WTAP, ZC3H13, CBLL1/HAKAI, VIRMA, and, in some cases of RBM15 (RBM15 or RBM15B) (PubMed:29535189). Also a component of a MACOM-like complex, named WTAP complex, composed of WTAP, ZC3H13, CBLL1, VIRMA, RBM15, BCLAF1 and THRAP3 (By similarity). Interacts with RBPJ (PubMed:17283045). Interacts (via SPOC domain) with SETD1B (By similarity). Interacts with NXF1, the interaction is required to promote mRNA export (By similarity). Interacts with SF3B1 (By similarity).</text>
</comment>
<comment type="subcellular location">
    <subcellularLocation>
        <location evidence="1">Nucleus speckle</location>
    </subcellularLocation>
    <subcellularLocation>
        <location evidence="5">Nucleus</location>
        <location evidence="5">Nucleoplasm</location>
    </subcellularLocation>
    <subcellularLocation>
        <location evidence="1">Nucleus envelope</location>
    </subcellularLocation>
    <subcellularLocation>
        <location evidence="1">Nucleus membrane</location>
        <topology evidence="1">Peripheral membrane protein</topology>
    </subcellularLocation>
    <text evidence="1">Colocalizes at the nuclear pore with DBP5 and NXF1.</text>
</comment>
<comment type="alternative products">
    <event type="alternative splicing"/>
    <isoform>
        <id>Q0VBL3-1</id>
        <name>1</name>
        <sequence type="displayed"/>
    </isoform>
    <isoform>
        <id>Q0VBL3-2</id>
        <name>2</name>
        <sequence type="described" ref="VSP_059625"/>
    </isoform>
</comment>
<comment type="PTM">
    <text evidence="1">Methylated at Arg-577 by PRMT1, leading to promote ubiquitination by CNOT4 and subsequent degradation by the proteasome.</text>
</comment>
<comment type="PTM">
    <text evidence="1">Ubiquitinated by CNOT4 following methylation at Arg-577 by PRMT1.</text>
</comment>
<comment type="disruption phenotype">
    <text evidence="6 7">Embryonic lethality around E9.5 (PubMed:17376872, PubMed:18981216). Early embryos show growth retardation and incomplete closure of the notochord, as well as placental defects in the spongiotrophoblast and syncytiotrophoblast layers, resulting in an arrest of vascular branching morphogenesis (PubMed:18981216). Conditional knockout mice lacking Rbm15 within the hematopoietic compartment display a loss of peripheral B-cells due to a block in pro/pre-B differentiation, as well as a myeloid and megakaryocytic expansion in spleen and bone marrow (PubMed:17376872).</text>
</comment>
<comment type="similarity">
    <text evidence="12">Belongs to the RRM Spen family.</text>
</comment>
<comment type="sequence caution" evidence="12">
    <conflict type="miscellaneous discrepancy">
        <sequence resource="EMBL-CDS" id="AAH80828"/>
    </conflict>
    <text>Contaminating sequence.</text>
</comment>
<comment type="sequence caution" evidence="12">
    <conflict type="erroneous initiation">
        <sequence resource="EMBL-CDS" id="BAD90348"/>
    </conflict>
    <text>Extended N-terminus.</text>
</comment>
<keyword id="KW-0007">Acetylation</keyword>
<keyword id="KW-0025">Alternative splicing</keyword>
<keyword id="KW-1017">Isopeptide bond</keyword>
<keyword id="KW-0472">Membrane</keyword>
<keyword id="KW-0488">Methylation</keyword>
<keyword id="KW-0539">Nucleus</keyword>
<keyword id="KW-0597">Phosphoprotein</keyword>
<keyword id="KW-1185">Reference proteome</keyword>
<keyword id="KW-0677">Repeat</keyword>
<keyword id="KW-0694">RNA-binding</keyword>
<keyword id="KW-0832">Ubl conjugation</keyword>
<reference key="1">
    <citation type="submission" date="2005-02" db="EMBL/GenBank/DDBJ databases">
        <title>Prediction of the Coding Sequences of Mouse Homologues of KIAA Gene. The Complete Nucleotide Sequences of Mouse KIAA-homologous cDNAs Identified by Screening of Terminal sequences of cDNA Clones Randomly Sampled from Size-Fractionated Libraries.</title>
        <authorList>
            <person name="Okazaki N."/>
            <person name="Kikuno R.F."/>
            <person name="Ohara R."/>
            <person name="Inamoto S."/>
            <person name="Koseki H."/>
            <person name="Hiraoka S."/>
            <person name="Saga Y."/>
            <person name="Nagase T."/>
            <person name="Ohara O."/>
            <person name="Koga H."/>
        </authorList>
    </citation>
    <scope>NUCLEOTIDE SEQUENCE (ISOFORM 2)</scope>
    <source>
        <tissue>Embryonic tail</tissue>
    </source>
</reference>
<reference key="2">
    <citation type="journal article" date="2009" name="PLoS Biol.">
        <title>Lineage-specific biology revealed by a finished genome assembly of the mouse.</title>
        <authorList>
            <person name="Church D.M."/>
            <person name="Goodstadt L."/>
            <person name="Hillier L.W."/>
            <person name="Zody M.C."/>
            <person name="Goldstein S."/>
            <person name="She X."/>
            <person name="Bult C.J."/>
            <person name="Agarwala R."/>
            <person name="Cherry J.L."/>
            <person name="DiCuccio M."/>
            <person name="Hlavina W."/>
            <person name="Kapustin Y."/>
            <person name="Meric P."/>
            <person name="Maglott D."/>
            <person name="Birtle Z."/>
            <person name="Marques A.C."/>
            <person name="Graves T."/>
            <person name="Zhou S."/>
            <person name="Teague B."/>
            <person name="Potamousis K."/>
            <person name="Churas C."/>
            <person name="Place M."/>
            <person name="Herschleb J."/>
            <person name="Runnheim R."/>
            <person name="Forrest D."/>
            <person name="Amos-Landgraf J."/>
            <person name="Schwartz D.C."/>
            <person name="Cheng Z."/>
            <person name="Lindblad-Toh K."/>
            <person name="Eichler E.E."/>
            <person name="Ponting C.P."/>
        </authorList>
    </citation>
    <scope>NUCLEOTIDE SEQUENCE [LARGE SCALE GENOMIC DNA]</scope>
    <source>
        <strain>C57BL/6J</strain>
    </source>
</reference>
<reference key="3">
    <citation type="journal article" date="2004" name="Genome Res.">
        <title>The status, quality, and expansion of the NIH full-length cDNA project: the Mammalian Gene Collection (MGC).</title>
        <authorList>
            <consortium name="The MGC Project Team"/>
        </authorList>
    </citation>
    <scope>NUCLEOTIDE SEQUENCE [LARGE SCALE MRNA] (ISOFORM 1)</scope>
    <source>
        <strain>C57BL/6J</strain>
        <tissue>Embryo</tissue>
        <tissue>Eye</tissue>
        <tissue>Thymus</tissue>
    </source>
</reference>
<reference key="4">
    <citation type="journal article" date="2005" name="Science">
        <title>The transcriptional landscape of the mammalian genome.</title>
        <authorList>
            <person name="Carninci P."/>
            <person name="Kasukawa T."/>
            <person name="Katayama S."/>
            <person name="Gough J."/>
            <person name="Frith M.C."/>
            <person name="Maeda N."/>
            <person name="Oyama R."/>
            <person name="Ravasi T."/>
            <person name="Lenhard B."/>
            <person name="Wells C."/>
            <person name="Kodzius R."/>
            <person name="Shimokawa K."/>
            <person name="Bajic V.B."/>
            <person name="Brenner S.E."/>
            <person name="Batalov S."/>
            <person name="Forrest A.R."/>
            <person name="Zavolan M."/>
            <person name="Davis M.J."/>
            <person name="Wilming L.G."/>
            <person name="Aidinis V."/>
            <person name="Allen J.E."/>
            <person name="Ambesi-Impiombato A."/>
            <person name="Apweiler R."/>
            <person name="Aturaliya R.N."/>
            <person name="Bailey T.L."/>
            <person name="Bansal M."/>
            <person name="Baxter L."/>
            <person name="Beisel K.W."/>
            <person name="Bersano T."/>
            <person name="Bono H."/>
            <person name="Chalk A.M."/>
            <person name="Chiu K.P."/>
            <person name="Choudhary V."/>
            <person name="Christoffels A."/>
            <person name="Clutterbuck D.R."/>
            <person name="Crowe M.L."/>
            <person name="Dalla E."/>
            <person name="Dalrymple B.P."/>
            <person name="de Bono B."/>
            <person name="Della Gatta G."/>
            <person name="di Bernardo D."/>
            <person name="Down T."/>
            <person name="Engstrom P."/>
            <person name="Fagiolini M."/>
            <person name="Faulkner G."/>
            <person name="Fletcher C.F."/>
            <person name="Fukushima T."/>
            <person name="Furuno M."/>
            <person name="Futaki S."/>
            <person name="Gariboldi M."/>
            <person name="Georgii-Hemming P."/>
            <person name="Gingeras T.R."/>
            <person name="Gojobori T."/>
            <person name="Green R.E."/>
            <person name="Gustincich S."/>
            <person name="Harbers M."/>
            <person name="Hayashi Y."/>
            <person name="Hensch T.K."/>
            <person name="Hirokawa N."/>
            <person name="Hill D."/>
            <person name="Huminiecki L."/>
            <person name="Iacono M."/>
            <person name="Ikeo K."/>
            <person name="Iwama A."/>
            <person name="Ishikawa T."/>
            <person name="Jakt M."/>
            <person name="Kanapin A."/>
            <person name="Katoh M."/>
            <person name="Kawasawa Y."/>
            <person name="Kelso J."/>
            <person name="Kitamura H."/>
            <person name="Kitano H."/>
            <person name="Kollias G."/>
            <person name="Krishnan S.P."/>
            <person name="Kruger A."/>
            <person name="Kummerfeld S.K."/>
            <person name="Kurochkin I.V."/>
            <person name="Lareau L.F."/>
            <person name="Lazarevic D."/>
            <person name="Lipovich L."/>
            <person name="Liu J."/>
            <person name="Liuni S."/>
            <person name="McWilliam S."/>
            <person name="Madan Babu M."/>
            <person name="Madera M."/>
            <person name="Marchionni L."/>
            <person name="Matsuda H."/>
            <person name="Matsuzawa S."/>
            <person name="Miki H."/>
            <person name="Mignone F."/>
            <person name="Miyake S."/>
            <person name="Morris K."/>
            <person name="Mottagui-Tabar S."/>
            <person name="Mulder N."/>
            <person name="Nakano N."/>
            <person name="Nakauchi H."/>
            <person name="Ng P."/>
            <person name="Nilsson R."/>
            <person name="Nishiguchi S."/>
            <person name="Nishikawa S."/>
            <person name="Nori F."/>
            <person name="Ohara O."/>
            <person name="Okazaki Y."/>
            <person name="Orlando V."/>
            <person name="Pang K.C."/>
            <person name="Pavan W.J."/>
            <person name="Pavesi G."/>
            <person name="Pesole G."/>
            <person name="Petrovsky N."/>
            <person name="Piazza S."/>
            <person name="Reed J."/>
            <person name="Reid J.F."/>
            <person name="Ring B.Z."/>
            <person name="Ringwald M."/>
            <person name="Rost B."/>
            <person name="Ruan Y."/>
            <person name="Salzberg S.L."/>
            <person name="Sandelin A."/>
            <person name="Schneider C."/>
            <person name="Schoenbach C."/>
            <person name="Sekiguchi K."/>
            <person name="Semple C.A."/>
            <person name="Seno S."/>
            <person name="Sessa L."/>
            <person name="Sheng Y."/>
            <person name="Shibata Y."/>
            <person name="Shimada H."/>
            <person name="Shimada K."/>
            <person name="Silva D."/>
            <person name="Sinclair B."/>
            <person name="Sperling S."/>
            <person name="Stupka E."/>
            <person name="Sugiura K."/>
            <person name="Sultana R."/>
            <person name="Takenaka Y."/>
            <person name="Taki K."/>
            <person name="Tammoja K."/>
            <person name="Tan S.L."/>
            <person name="Tang S."/>
            <person name="Taylor M.S."/>
            <person name="Tegner J."/>
            <person name="Teichmann S.A."/>
            <person name="Ueda H.R."/>
            <person name="van Nimwegen E."/>
            <person name="Verardo R."/>
            <person name="Wei C.L."/>
            <person name="Yagi K."/>
            <person name="Yamanishi H."/>
            <person name="Zabarovsky E."/>
            <person name="Zhu S."/>
            <person name="Zimmer A."/>
            <person name="Hide W."/>
            <person name="Bult C."/>
            <person name="Grimmond S.M."/>
            <person name="Teasdale R.D."/>
            <person name="Liu E.T."/>
            <person name="Brusic V."/>
            <person name="Quackenbush J."/>
            <person name="Wahlestedt C."/>
            <person name="Mattick J.S."/>
            <person name="Hume D.A."/>
            <person name="Kai C."/>
            <person name="Sasaki D."/>
            <person name="Tomaru Y."/>
            <person name="Fukuda S."/>
            <person name="Kanamori-Katayama M."/>
            <person name="Suzuki M."/>
            <person name="Aoki J."/>
            <person name="Arakawa T."/>
            <person name="Iida J."/>
            <person name="Imamura K."/>
            <person name="Itoh M."/>
            <person name="Kato T."/>
            <person name="Kawaji H."/>
            <person name="Kawagashira N."/>
            <person name="Kawashima T."/>
            <person name="Kojima M."/>
            <person name="Kondo S."/>
            <person name="Konno H."/>
            <person name="Nakano K."/>
            <person name="Ninomiya N."/>
            <person name="Nishio T."/>
            <person name="Okada M."/>
            <person name="Plessy C."/>
            <person name="Shibata K."/>
            <person name="Shiraki T."/>
            <person name="Suzuki S."/>
            <person name="Tagami M."/>
            <person name="Waki K."/>
            <person name="Watahiki A."/>
            <person name="Okamura-Oho Y."/>
            <person name="Suzuki H."/>
            <person name="Kawai J."/>
            <person name="Hayashizaki Y."/>
        </authorList>
    </citation>
    <scope>NUCLEOTIDE SEQUENCE [LARGE SCALE MRNA] OF 11-958 (ISOFORM 2)</scope>
    <scope>NUCLEOTIDE SEQUENCE [LARGE SCALE MRNA] OF 14-962 (ISOFORM 1)</scope>
    <source>
        <tissue evidence="13">Mammary gland</tissue>
    </source>
</reference>
<reference key="5">
    <citation type="journal article" date="2007" name="Mol. Cell. Biol.">
        <title>Rbm15 modulates Notch-induced transcriptional activation and affects myeloid differentiation.</title>
        <authorList>
            <person name="Ma X."/>
            <person name="Renda M.J."/>
            <person name="Wang L."/>
            <person name="Cheng E.C."/>
            <person name="Niu C."/>
            <person name="Morris S.W."/>
            <person name="Chi A.S."/>
            <person name="Krause D.S."/>
        </authorList>
    </citation>
    <scope>FUNCTION</scope>
    <scope>SUBCELLULAR LOCATION</scope>
    <scope>INTERACTION WITH RBPJ</scope>
</reference>
<reference key="6">
    <citation type="journal article" date="2007" name="Proc. Natl. Acad. Sci. U.S.A.">
        <title>Ott1(Rbm15) has pleiotropic roles in hematopoietic development.</title>
        <authorList>
            <person name="Raffel G.D."/>
            <person name="Mercher T."/>
            <person name="Shigematsu H."/>
            <person name="Williams I.R."/>
            <person name="Cullen D.E."/>
            <person name="Akashi K."/>
            <person name="Bernard O.A."/>
            <person name="Gilliland D.G."/>
        </authorList>
    </citation>
    <scope>FUNCTION</scope>
    <scope>DISRUPTION PHENOTYPE</scope>
</reference>
<reference key="7">
    <citation type="journal article" date="2009" name="Mol. Cell. Biol.">
        <title>Ott1 (Rbm15) is essential for placental vascular branching morphogenesis and embryonic development of the heart and spleen.</title>
        <authorList>
            <person name="Raffel G.D."/>
            <person name="Chu G.C."/>
            <person name="Jesneck J.L."/>
            <person name="Cullen D.E."/>
            <person name="Bronson R.T."/>
            <person name="Bernard O.A."/>
            <person name="Gilliland D.G."/>
        </authorList>
    </citation>
    <scope>FUNCTION</scope>
    <scope>DISRUPTION PHENOTYPE</scope>
</reference>
<reference key="8">
    <citation type="journal article" date="2015" name="Blood">
        <title>Ott1 (Rbm15) regulates thrombopoietin response in hematopoietic stem cells through alternative splicing of c-Mpl.</title>
        <authorList>
            <person name="Xiao N."/>
            <person name="Laha S."/>
            <person name="Das S.P."/>
            <person name="Morlock K."/>
            <person name="Jesneck J.L."/>
            <person name="Raffel G.D."/>
        </authorList>
    </citation>
    <scope>FUNCTION</scope>
    <scope>RNA BINDING</scope>
</reference>
<reference key="9">
    <citation type="journal article" date="2018" name="Genes Dev.">
        <title>Zc3h13/Flacc is required for adenosine methylation by bridging the mRNA-binding factor Rbm15/Spenito to the m6A machinery component Wtap/Fl(2)d.</title>
        <authorList>
            <person name="Knuckles P."/>
            <person name="Lence T."/>
            <person name="Haussmann I.U."/>
            <person name="Jacob D."/>
            <person name="Kreim N."/>
            <person name="Carl S.H."/>
            <person name="Masiello I."/>
            <person name="Hares T."/>
            <person name="Villasenor R."/>
            <person name="Hess D."/>
            <person name="Andrade-Navarro M.A."/>
            <person name="Biggiogera M."/>
            <person name="Helm M."/>
            <person name="Soller M."/>
            <person name="Buehler M."/>
            <person name="Roignant J.Y."/>
        </authorList>
    </citation>
    <scope>IDENTIFICATION IN THE WMM COMPLEX</scope>
    <scope>FUNCTION</scope>
</reference>
<protein>
    <recommendedName>
        <fullName evidence="10">RNA-binding protein 15</fullName>
    </recommendedName>
    <alternativeName>
        <fullName evidence="10">One-twenty two protein 1</fullName>
    </alternativeName>
    <alternativeName>
        <fullName evidence="10">RNA-binding motif protein 15</fullName>
    </alternativeName>
</protein>
<evidence type="ECO:0000250" key="1">
    <source>
        <dbReference type="UniProtKB" id="Q96T37"/>
    </source>
</evidence>
<evidence type="ECO:0000255" key="2">
    <source>
        <dbReference type="PROSITE-ProRule" id="PRU00176"/>
    </source>
</evidence>
<evidence type="ECO:0000255" key="3">
    <source>
        <dbReference type="PROSITE-ProRule" id="PRU00249"/>
    </source>
</evidence>
<evidence type="ECO:0000256" key="4">
    <source>
        <dbReference type="SAM" id="MobiDB-lite"/>
    </source>
</evidence>
<evidence type="ECO:0000269" key="5">
    <source>
    </source>
</evidence>
<evidence type="ECO:0000269" key="6">
    <source>
    </source>
</evidence>
<evidence type="ECO:0000269" key="7">
    <source>
    </source>
</evidence>
<evidence type="ECO:0000269" key="8">
    <source>
    </source>
</evidence>
<evidence type="ECO:0000269" key="9">
    <source>
    </source>
</evidence>
<evidence type="ECO:0000303" key="10">
    <source>
    </source>
</evidence>
<evidence type="ECO:0000303" key="11">
    <source ref="1"/>
</evidence>
<evidence type="ECO:0000305" key="12"/>
<evidence type="ECO:0000312" key="13">
    <source>
        <dbReference type="EMBL" id="BAE38672.1"/>
    </source>
</evidence>
<evidence type="ECO:0000312" key="14">
    <source>
        <dbReference type="MGI" id="MGI:2443205"/>
    </source>
</evidence>
<dbReference type="EMBL" id="AK220162">
    <property type="protein sequence ID" value="BAD90348.1"/>
    <property type="status" value="ALT_INIT"/>
    <property type="molecule type" value="mRNA"/>
</dbReference>
<dbReference type="EMBL" id="AC132405">
    <property type="status" value="NOT_ANNOTATED_CDS"/>
    <property type="molecule type" value="Genomic_DNA"/>
</dbReference>
<dbReference type="EMBL" id="BC028452">
    <property type="protein sequence ID" value="AAH28452.1"/>
    <property type="molecule type" value="mRNA"/>
</dbReference>
<dbReference type="EMBL" id="BC051409">
    <property type="protein sequence ID" value="AAH51409.1"/>
    <property type="molecule type" value="mRNA"/>
</dbReference>
<dbReference type="EMBL" id="BC057038">
    <property type="protein sequence ID" value="AAH57038.1"/>
    <property type="molecule type" value="mRNA"/>
</dbReference>
<dbReference type="EMBL" id="BC080828">
    <property type="protein sequence ID" value="AAH80828.1"/>
    <property type="status" value="ALT_SEQ"/>
    <property type="molecule type" value="mRNA"/>
</dbReference>
<dbReference type="EMBL" id="BC120590">
    <property type="protein sequence ID" value="AAI20591.1"/>
    <property type="molecule type" value="mRNA"/>
</dbReference>
<dbReference type="EMBL" id="BC137741">
    <property type="protein sequence ID" value="AAI37742.1"/>
    <property type="molecule type" value="mRNA"/>
</dbReference>
<dbReference type="EMBL" id="AK166271">
    <property type="protein sequence ID" value="BAE38672.1"/>
    <property type="molecule type" value="mRNA"/>
</dbReference>
<dbReference type="EMBL" id="AK168242">
    <property type="protein sequence ID" value="BAE40192.1"/>
    <property type="molecule type" value="mRNA"/>
</dbReference>
<dbReference type="CCDS" id="CCDS38590.1">
    <molecule id="Q0VBL3-1"/>
</dbReference>
<dbReference type="RefSeq" id="NP_001039272.1">
    <molecule id="Q0VBL3-1"/>
    <property type="nucleotide sequence ID" value="NM_001045807.2"/>
</dbReference>
<dbReference type="SMR" id="Q0VBL3"/>
<dbReference type="FunCoup" id="Q0VBL3">
    <property type="interactions" value="3996"/>
</dbReference>
<dbReference type="IntAct" id="Q0VBL3">
    <property type="interactions" value="4"/>
</dbReference>
<dbReference type="MINT" id="Q0VBL3"/>
<dbReference type="STRING" id="10090.ENSMUSP00000054424"/>
<dbReference type="GlyGen" id="Q0VBL3">
    <property type="glycosylation" value="2 sites, 2 N-linked glycans (2 sites)"/>
</dbReference>
<dbReference type="iPTMnet" id="Q0VBL3"/>
<dbReference type="PhosphoSitePlus" id="Q0VBL3"/>
<dbReference type="jPOST" id="Q0VBL3"/>
<dbReference type="PaxDb" id="10090-ENSMUSP00000054424"/>
<dbReference type="PeptideAtlas" id="Q0VBL3"/>
<dbReference type="ProteomicsDB" id="338722">
    <molecule id="Q0VBL3-1"/>
</dbReference>
<dbReference type="Pumba" id="Q0VBL3"/>
<dbReference type="Antibodypedia" id="4448">
    <property type="antibodies" value="140 antibodies from 27 providers"/>
</dbReference>
<dbReference type="Ensembl" id="ENSMUST00000061772.11">
    <molecule id="Q0VBL3-1"/>
    <property type="protein sequence ID" value="ENSMUSP00000054424.10"/>
    <property type="gene ID" value="ENSMUSG00000048109.11"/>
</dbReference>
<dbReference type="GeneID" id="229700"/>
<dbReference type="KEGG" id="mmu:229700"/>
<dbReference type="UCSC" id="uc008qwz.1">
    <molecule id="Q0VBL3-1"/>
    <property type="organism name" value="mouse"/>
</dbReference>
<dbReference type="AGR" id="MGI:2443205"/>
<dbReference type="CTD" id="64783"/>
<dbReference type="MGI" id="MGI:2443205">
    <property type="gene designation" value="Rbm15"/>
</dbReference>
<dbReference type="VEuPathDB" id="HostDB:ENSMUSG00000048109"/>
<dbReference type="eggNOG" id="KOG0112">
    <property type="taxonomic scope" value="Eukaryota"/>
</dbReference>
<dbReference type="GeneTree" id="ENSGT00940000158161"/>
<dbReference type="HOGENOM" id="CLU_012724_1_0_1"/>
<dbReference type="InParanoid" id="Q0VBL3"/>
<dbReference type="OMA" id="EWPNPAI"/>
<dbReference type="OrthoDB" id="10050565at2759"/>
<dbReference type="PhylomeDB" id="Q0VBL3"/>
<dbReference type="TreeFam" id="TF315637"/>
<dbReference type="BioGRID-ORCS" id="229700">
    <property type="hits" value="27 hits in 82 CRISPR screens"/>
</dbReference>
<dbReference type="ChiTaRS" id="Rbm15">
    <property type="organism name" value="mouse"/>
</dbReference>
<dbReference type="PRO" id="PR:Q0VBL3"/>
<dbReference type="Proteomes" id="UP000000589">
    <property type="component" value="Chromosome 3"/>
</dbReference>
<dbReference type="RNAct" id="Q0VBL3">
    <property type="molecule type" value="protein"/>
</dbReference>
<dbReference type="Bgee" id="ENSMUSG00000048109">
    <property type="expression patterns" value="Expressed in indifferent gonad and 228 other cell types or tissues"/>
</dbReference>
<dbReference type="GO" id="GO:0031965">
    <property type="term" value="C:nuclear membrane"/>
    <property type="evidence" value="ECO:0007669"/>
    <property type="project" value="UniProtKB-SubCell"/>
</dbReference>
<dbReference type="GO" id="GO:0016607">
    <property type="term" value="C:nuclear speck"/>
    <property type="evidence" value="ECO:0007669"/>
    <property type="project" value="UniProtKB-SubCell"/>
</dbReference>
<dbReference type="GO" id="GO:0005634">
    <property type="term" value="C:nucleus"/>
    <property type="evidence" value="ECO:0000314"/>
    <property type="project" value="MGI"/>
</dbReference>
<dbReference type="GO" id="GO:0036396">
    <property type="term" value="C:RNA N6-methyladenosine methyltransferase complex"/>
    <property type="evidence" value="ECO:0000250"/>
    <property type="project" value="UniProtKB"/>
</dbReference>
<dbReference type="GO" id="GO:0003729">
    <property type="term" value="F:mRNA binding"/>
    <property type="evidence" value="ECO:0000250"/>
    <property type="project" value="UniProtKB"/>
</dbReference>
<dbReference type="GO" id="GO:0003723">
    <property type="term" value="F:RNA binding"/>
    <property type="evidence" value="ECO:0000314"/>
    <property type="project" value="UniProtKB"/>
</dbReference>
<dbReference type="GO" id="GO:0001569">
    <property type="term" value="P:branching involved in blood vessel morphogenesis"/>
    <property type="evidence" value="ECO:0000315"/>
    <property type="project" value="MGI"/>
</dbReference>
<dbReference type="GO" id="GO:0009048">
    <property type="term" value="P:dosage compensation by inactivation of X chromosome"/>
    <property type="evidence" value="ECO:0000250"/>
    <property type="project" value="UniProtKB"/>
</dbReference>
<dbReference type="GO" id="GO:0045638">
    <property type="term" value="P:negative regulation of myeloid cell differentiation"/>
    <property type="evidence" value="ECO:0000314"/>
    <property type="project" value="MGI"/>
</dbReference>
<dbReference type="GO" id="GO:0000122">
    <property type="term" value="P:negative regulation of transcription by RNA polymerase II"/>
    <property type="evidence" value="ECO:0000314"/>
    <property type="project" value="MGI"/>
</dbReference>
<dbReference type="GO" id="GO:0060674">
    <property type="term" value="P:placenta blood vessel development"/>
    <property type="evidence" value="ECO:0000315"/>
    <property type="project" value="MGI"/>
</dbReference>
<dbReference type="GO" id="GO:0007221">
    <property type="term" value="P:positive regulation of transcription of Notch receptor target"/>
    <property type="evidence" value="ECO:0000314"/>
    <property type="project" value="MGI"/>
</dbReference>
<dbReference type="GO" id="GO:0000381">
    <property type="term" value="P:regulation of alternative mRNA splicing, via spliceosome"/>
    <property type="evidence" value="ECO:0000314"/>
    <property type="project" value="UniProtKB"/>
</dbReference>
<dbReference type="GO" id="GO:0045652">
    <property type="term" value="P:regulation of megakaryocyte differentiation"/>
    <property type="evidence" value="ECO:0007669"/>
    <property type="project" value="Ensembl"/>
</dbReference>
<dbReference type="GO" id="GO:0001510">
    <property type="term" value="P:RNA methylation"/>
    <property type="evidence" value="ECO:0000250"/>
    <property type="project" value="UniProtKB"/>
</dbReference>
<dbReference type="GO" id="GO:0048536">
    <property type="term" value="P:spleen development"/>
    <property type="evidence" value="ECO:0000315"/>
    <property type="project" value="MGI"/>
</dbReference>
<dbReference type="GO" id="GO:0038163">
    <property type="term" value="P:thrombopoietin-mediated signaling pathway"/>
    <property type="evidence" value="ECO:0000314"/>
    <property type="project" value="UniProtKB"/>
</dbReference>
<dbReference type="GO" id="GO:0060412">
    <property type="term" value="P:ventricular septum morphogenesis"/>
    <property type="evidence" value="ECO:0000315"/>
    <property type="project" value="MGI"/>
</dbReference>
<dbReference type="CDD" id="cd12553">
    <property type="entry name" value="RRM1_RBM15"/>
    <property type="match status" value="1"/>
</dbReference>
<dbReference type="CDD" id="cd12555">
    <property type="entry name" value="RRM2_RBM15"/>
    <property type="match status" value="1"/>
</dbReference>
<dbReference type="CDD" id="cd12557">
    <property type="entry name" value="RRM3_RBM15"/>
    <property type="match status" value="1"/>
</dbReference>
<dbReference type="FunFam" id="3.30.70.330:FF:000181">
    <property type="entry name" value="RNA binding motif protein 15"/>
    <property type="match status" value="1"/>
</dbReference>
<dbReference type="FunFam" id="3.30.70.330:FF:000195">
    <property type="entry name" value="RNA binding motif protein 15"/>
    <property type="match status" value="1"/>
</dbReference>
<dbReference type="FunFam" id="2.40.290.10:FF:000003">
    <property type="entry name" value="RNA-binding motif protein 15"/>
    <property type="match status" value="1"/>
</dbReference>
<dbReference type="FunFam" id="3.30.70.330:FF:000112">
    <property type="entry name" value="RNA-binding motif protein 15"/>
    <property type="match status" value="1"/>
</dbReference>
<dbReference type="Gene3D" id="2.40.290.10">
    <property type="match status" value="1"/>
</dbReference>
<dbReference type="Gene3D" id="3.30.70.330">
    <property type="match status" value="3"/>
</dbReference>
<dbReference type="InterPro" id="IPR012677">
    <property type="entry name" value="Nucleotide-bd_a/b_plait_sf"/>
</dbReference>
<dbReference type="InterPro" id="IPR035979">
    <property type="entry name" value="RBD_domain_sf"/>
</dbReference>
<dbReference type="InterPro" id="IPR034470">
    <property type="entry name" value="RBM15_RRM1"/>
</dbReference>
<dbReference type="InterPro" id="IPR034472">
    <property type="entry name" value="RBM15_RRM2"/>
</dbReference>
<dbReference type="InterPro" id="IPR034473">
    <property type="entry name" value="RBM15_RRM3"/>
</dbReference>
<dbReference type="InterPro" id="IPR000504">
    <property type="entry name" value="RRM_dom"/>
</dbReference>
<dbReference type="InterPro" id="IPR016194">
    <property type="entry name" value="SPOC-like_C_dom_sf"/>
</dbReference>
<dbReference type="InterPro" id="IPR012921">
    <property type="entry name" value="SPOC_C"/>
</dbReference>
<dbReference type="InterPro" id="IPR010912">
    <property type="entry name" value="SPOC_met"/>
</dbReference>
<dbReference type="PANTHER" id="PTHR23189">
    <property type="entry name" value="RNA RECOGNITION MOTIF-CONTAINING"/>
    <property type="match status" value="1"/>
</dbReference>
<dbReference type="Pfam" id="PF00076">
    <property type="entry name" value="RRM_1"/>
    <property type="match status" value="2"/>
</dbReference>
<dbReference type="Pfam" id="PF07744">
    <property type="entry name" value="SPOC"/>
    <property type="match status" value="1"/>
</dbReference>
<dbReference type="SMART" id="SM00360">
    <property type="entry name" value="RRM"/>
    <property type="match status" value="3"/>
</dbReference>
<dbReference type="SUPFAM" id="SSF54928">
    <property type="entry name" value="RNA-binding domain, RBD"/>
    <property type="match status" value="2"/>
</dbReference>
<dbReference type="SUPFAM" id="SSF100939">
    <property type="entry name" value="SPOC domain-like"/>
    <property type="match status" value="1"/>
</dbReference>
<dbReference type="PROSITE" id="PS50102">
    <property type="entry name" value="RRM"/>
    <property type="match status" value="3"/>
</dbReference>
<dbReference type="PROSITE" id="PS50917">
    <property type="entry name" value="SPOC"/>
    <property type="match status" value="1"/>
</dbReference>
<sequence length="962" mass="105722">MRSAGREPLPRRSPRWRRASPLCETSAGWRVSQLRRDDLRRPSTMKGKERSPVKPKRSRGGEDSSSRGERSKKLGGSGGSNGSSSGKTDSGGSRRSLHLDKSSSRGGSREYETGGGSSSSRLHSYSSPSTKNSSGGGESRSSSRGGGGESRSSGAASSAPGGGDGVEYKTLKISELGSQLSDEAVEDGLFHEFKRFGDVSVKISHLSGSGSGDERVAFVNFRRPEDARAAKHARGRLVLYDRPLKIEAVYVSRRRSRSPLDKDAYAPSSSVVGTSVGSHRHAPGGGGGQRSLSPGGAALGYRDYRLQQLALGRLPPPPPPPLPRELERERDYPFYDRVRPAYSLEPRVGAGAGAAPFREVDEISPEDDQRANRTLFLGNLDITVTENDLRRAFDRFGVITEVDIKRPSRGQTSTYGFLKFENLDMSHRAKLAMSGKIIIRNPIKIGYGKATPTTRLWVGGLGPWVPLAALAREFDRFGTIRTIDYRKGDSWAYIQYESLDAAHAAWTHMRGFPLGGPDRRLRVDFADTEHRYQQQYLQPLPLTHYELVTDTFGHRAPDPLRSARDRTPPLLYRDRDRDLYTDSDWVPPPPPVRERSARAATSAVTAYEPLDSLDRRRDGWSLDRDRGDRDLPSSRDQPRKRRLPEESGGRHLDRSPESERPRKQRHCTPSPDRSPELSSNRDRYNSDNDRSSRLLLLERSSPVRDRRGSLEKSQSDKRDRKNSASAERDRKHRTAAPTEGKNPLKKEDRSDGNAPSASTSSSKQKPPSQKQDGGTAPVAASSPKLCLAWQGMLLLKNSNFPSNMHLLQGDLQVASSLLVEGSTGGKVAQLKITQRLRLDQPKLDEVTRRIKVAGPNGYAILLAVPGSSDSRSSSSSATSDTAASTQRPLRNLVSYLKQKQAAGVISLPVGGNKDKENTGVLHAFPPCEFSQQFLDSPAKALAKSEEDYLVMIIVRAKLVNSG</sequence>
<accession>Q0VBL3</accession>
<accession>A0PJG5</accession>
<accession>Q3THK4</accession>
<accession>Q3TLX0</accession>
<accession>Q571M7</accession>
<accession>Q66JP8</accession>
<accession>Q6PGG1</accession>
<accession>Q7TT82</accession>
<gene>
    <name evidence="10 14" type="primary">Rbm15</name>
    <name evidence="11" type="synonym">Kiaa4257</name>
    <name evidence="10" type="synonym">Ott1</name>
</gene>
<organism>
    <name type="scientific">Mus musculus</name>
    <name type="common">Mouse</name>
    <dbReference type="NCBI Taxonomy" id="10090"/>
    <lineage>
        <taxon>Eukaryota</taxon>
        <taxon>Metazoa</taxon>
        <taxon>Chordata</taxon>
        <taxon>Craniata</taxon>
        <taxon>Vertebrata</taxon>
        <taxon>Euteleostomi</taxon>
        <taxon>Mammalia</taxon>
        <taxon>Eutheria</taxon>
        <taxon>Euarchontoglires</taxon>
        <taxon>Glires</taxon>
        <taxon>Rodentia</taxon>
        <taxon>Myomorpha</taxon>
        <taxon>Muroidea</taxon>
        <taxon>Muridae</taxon>
        <taxon>Murinae</taxon>
        <taxon>Mus</taxon>
        <taxon>Mus</taxon>
    </lineage>
</organism>
<proteinExistence type="evidence at protein level"/>
<feature type="chain" id="PRO_0000444611" description="RNA-binding protein 15">
    <location>
        <begin position="1"/>
        <end position="962"/>
    </location>
</feature>
<feature type="domain" description="RRM 1" evidence="2">
    <location>
        <begin position="169"/>
        <end position="251"/>
    </location>
</feature>
<feature type="domain" description="RRM 2" evidence="2">
    <location>
        <begin position="373"/>
        <end position="450"/>
    </location>
</feature>
<feature type="domain" description="RRM 3" evidence="2">
    <location>
        <begin position="454"/>
        <end position="528"/>
    </location>
</feature>
<feature type="domain" description="SPOC" evidence="3">
    <location>
        <begin position="778"/>
        <end position="957"/>
    </location>
</feature>
<feature type="region of interest" description="Disordered" evidence="4">
    <location>
        <begin position="1"/>
        <end position="167"/>
    </location>
</feature>
<feature type="region of interest" description="Disordered" evidence="4">
    <location>
        <begin position="257"/>
        <end position="297"/>
    </location>
</feature>
<feature type="region of interest" description="Disordered" evidence="4">
    <location>
        <begin position="553"/>
        <end position="779"/>
    </location>
</feature>
<feature type="region of interest" description="Disordered" evidence="4">
    <location>
        <begin position="866"/>
        <end position="885"/>
    </location>
</feature>
<feature type="compositionally biased region" description="Basic and acidic residues" evidence="4">
    <location>
        <begin position="1"/>
        <end position="10"/>
    </location>
</feature>
<feature type="compositionally biased region" description="Basic and acidic residues" evidence="4">
    <location>
        <begin position="34"/>
        <end position="52"/>
    </location>
</feature>
<feature type="compositionally biased region" description="Basic and acidic residues" evidence="4">
    <location>
        <begin position="59"/>
        <end position="72"/>
    </location>
</feature>
<feature type="compositionally biased region" description="Low complexity" evidence="4">
    <location>
        <begin position="82"/>
        <end position="94"/>
    </location>
</feature>
<feature type="compositionally biased region" description="Basic and acidic residues" evidence="4">
    <location>
        <begin position="97"/>
        <end position="112"/>
    </location>
</feature>
<feature type="compositionally biased region" description="Low complexity" evidence="4">
    <location>
        <begin position="118"/>
        <end position="129"/>
    </location>
</feature>
<feature type="compositionally biased region" description="Gly residues" evidence="4">
    <location>
        <begin position="134"/>
        <end position="149"/>
    </location>
</feature>
<feature type="compositionally biased region" description="Low complexity" evidence="4">
    <location>
        <begin position="150"/>
        <end position="159"/>
    </location>
</feature>
<feature type="compositionally biased region" description="Low complexity" evidence="4">
    <location>
        <begin position="268"/>
        <end position="277"/>
    </location>
</feature>
<feature type="compositionally biased region" description="Basic and acidic residues" evidence="4">
    <location>
        <begin position="553"/>
        <end position="580"/>
    </location>
</feature>
<feature type="compositionally biased region" description="Basic and acidic residues" evidence="4">
    <location>
        <begin position="612"/>
        <end position="661"/>
    </location>
</feature>
<feature type="compositionally biased region" description="Basic and acidic residues" evidence="4">
    <location>
        <begin position="673"/>
        <end position="692"/>
    </location>
</feature>
<feature type="compositionally biased region" description="Basic and acidic residues" evidence="4">
    <location>
        <begin position="701"/>
        <end position="729"/>
    </location>
</feature>
<feature type="compositionally biased region" description="Basic and acidic residues" evidence="4">
    <location>
        <begin position="742"/>
        <end position="751"/>
    </location>
</feature>
<feature type="compositionally biased region" description="Low complexity" evidence="4">
    <location>
        <begin position="754"/>
        <end position="771"/>
    </location>
</feature>
<feature type="compositionally biased region" description="Low complexity" evidence="4">
    <location>
        <begin position="867"/>
        <end position="885"/>
    </location>
</feature>
<feature type="modified residue" description="Phosphoserine" evidence="1">
    <location>
        <position position="108"/>
    </location>
</feature>
<feature type="modified residue" description="Phosphoserine" evidence="1">
    <location>
        <position position="178"/>
    </location>
</feature>
<feature type="modified residue" description="Phosphoserine" evidence="1">
    <location>
        <position position="207"/>
    </location>
</feature>
<feature type="modified residue" description="Phosphoserine" evidence="1">
    <location>
        <position position="209"/>
    </location>
</feature>
<feature type="modified residue" description="Phosphoserine" evidence="1">
    <location>
        <position position="252"/>
    </location>
</feature>
<feature type="modified residue" description="Phosphoserine" evidence="1">
    <location>
        <position position="256"/>
    </location>
</feature>
<feature type="modified residue" description="Phosphoserine" evidence="1">
    <location>
        <position position="258"/>
    </location>
</feature>
<feature type="modified residue" description="Phosphotyrosine" evidence="1">
    <location>
        <position position="265"/>
    </location>
</feature>
<feature type="modified residue" description="Phosphoserine" evidence="1">
    <location>
        <position position="291"/>
    </location>
</feature>
<feature type="modified residue" description="Phosphoserine" evidence="1">
    <location>
        <position position="293"/>
    </location>
</feature>
<feature type="modified residue" description="Phosphoserine" evidence="1">
    <location>
        <position position="364"/>
    </location>
</feature>
<feature type="modified residue" description="N6-acetyllysine" evidence="1">
    <location>
        <position position="449"/>
    </location>
</feature>
<feature type="modified residue" description="Phosphothreonine" evidence="1">
    <location>
        <position position="567"/>
    </location>
</feature>
<feature type="modified residue" description="Asymmetric dimethylarginine; alternate; by PRMT1" evidence="1">
    <location>
        <position position="577"/>
    </location>
</feature>
<feature type="modified residue" description="Omega-N-methylarginine; alternate; by PRMT1" evidence="1">
    <location>
        <position position="577"/>
    </location>
</feature>
<feature type="modified residue" description="Phosphoserine" evidence="1">
    <location>
        <position position="621"/>
    </location>
</feature>
<feature type="modified residue" description="Phosphoserine" evidence="1">
    <location>
        <position position="655"/>
    </location>
</feature>
<feature type="modified residue" description="Phosphoserine" evidence="1">
    <location>
        <position position="670"/>
    </location>
</feature>
<feature type="modified residue" description="Phosphoserine" evidence="1">
    <location>
        <position position="674"/>
    </location>
</feature>
<feature type="modified residue" description="Phosphoserine" evidence="1">
    <location>
        <position position="701"/>
    </location>
</feature>
<feature type="modified residue" description="Phosphoserine" evidence="1">
    <location>
        <position position="768"/>
    </location>
</feature>
<feature type="modified residue" description="Phosphoserine" evidence="1">
    <location>
        <position position="782"/>
    </location>
</feature>
<feature type="modified residue" description="Phosphoserine" evidence="1">
    <location>
        <position position="936"/>
    </location>
</feature>
<feature type="cross-link" description="Glycyl lysine isopeptide (Lys-Gly) (interchain with G-Cter in SUMO2)" evidence="1">
    <location>
        <position position="245"/>
    </location>
</feature>
<feature type="cross-link" description="Glycyl lysine isopeptide (Lys-Gly) (interchain with G-Cter in SUMO2)" evidence="1">
    <location>
        <position position="405"/>
    </location>
</feature>
<feature type="cross-link" description="Glycyl lysine isopeptide (Lys-Gly) (interchain with G-Cter in SUMO2)" evidence="1">
    <location>
        <position position="419"/>
    </location>
</feature>
<feature type="cross-link" description="Glycyl lysine isopeptide (Lys-Gly) (interchain with G-Cter in SUMO2)" evidence="1">
    <location>
        <position position="444"/>
    </location>
</feature>
<feature type="cross-link" description="Glycyl lysine isopeptide (Lys-Gly) (interchain with G-Cter in SUMO2)" evidence="1">
    <location>
        <position position="745"/>
    </location>
</feature>
<feature type="splice variant" id="VSP_059625" description="In isoform 2.">
    <original>AKLVNSG</original>
    <variation>GAS</variation>
    <location>
        <begin position="956"/>
        <end position="962"/>
    </location>
</feature>
<feature type="sequence conflict" description="In Ref. 1; BAD90348." evidence="12" ref="1">
    <original>R</original>
    <variation>P</variation>
    <location>
        <position position="41"/>
    </location>
</feature>
<feature type="sequence conflict" description="In Ref. 4; BAE40192." evidence="12" ref="4">
    <original>G</original>
    <variation>S</variation>
    <location>
        <position position="78"/>
    </location>
</feature>
<feature type="sequence conflict" description="In Ref. 4; BAE38672." evidence="12" ref="4">
    <original>S</original>
    <variation>A</variation>
    <location>
        <position position="157"/>
    </location>
</feature>
<feature type="sequence conflict" description="In Ref. 4; BAE40192." evidence="12" ref="4">
    <original>G</original>
    <variation>S</variation>
    <location>
        <position position="619"/>
    </location>
</feature>